<reference key="1">
    <citation type="journal article" date="1997" name="J. Bacteriol.">
        <title>Complete genome sequence of Methanobacterium thermoautotrophicum deltaH: functional analysis and comparative genomics.</title>
        <authorList>
            <person name="Smith D.R."/>
            <person name="Doucette-Stamm L.A."/>
            <person name="Deloughery C."/>
            <person name="Lee H.-M."/>
            <person name="Dubois J."/>
            <person name="Aldredge T."/>
            <person name="Bashirzadeh R."/>
            <person name="Blakely D."/>
            <person name="Cook R."/>
            <person name="Gilbert K."/>
            <person name="Harrison D."/>
            <person name="Hoang L."/>
            <person name="Keagle P."/>
            <person name="Lumm W."/>
            <person name="Pothier B."/>
            <person name="Qiu D."/>
            <person name="Spadafora R."/>
            <person name="Vicare R."/>
            <person name="Wang Y."/>
            <person name="Wierzbowski J."/>
            <person name="Gibson R."/>
            <person name="Jiwani N."/>
            <person name="Caruso A."/>
            <person name="Bush D."/>
            <person name="Safer H."/>
            <person name="Patwell D."/>
            <person name="Prabhakar S."/>
            <person name="McDougall S."/>
            <person name="Shimer G."/>
            <person name="Goyal A."/>
            <person name="Pietrovski S."/>
            <person name="Church G.M."/>
            <person name="Daniels C.J."/>
            <person name="Mao J.-I."/>
            <person name="Rice P."/>
            <person name="Noelling J."/>
            <person name="Reeve J.N."/>
        </authorList>
    </citation>
    <scope>NUCLEOTIDE SEQUENCE [LARGE SCALE GENOMIC DNA]</scope>
    <source>
        <strain>ATCC 29096 / DSM 1053 / JCM 10044 / NBRC 100330 / Delta H</strain>
    </source>
</reference>
<proteinExistence type="inferred from homology"/>
<keyword id="KW-0067">ATP-binding</keyword>
<keyword id="KW-0169">Cobalamin biosynthesis</keyword>
<keyword id="KW-0315">Glutamine amidotransferase</keyword>
<keyword id="KW-0436">Ligase</keyword>
<keyword id="KW-0460">Magnesium</keyword>
<keyword id="KW-0484">Methanogenesis</keyword>
<keyword id="KW-0547">Nucleotide-binding</keyword>
<keyword id="KW-1185">Reference proteome</keyword>
<comment type="function">
    <text evidence="1">Catalyzes the ATP-dependent amidation of the two carboxylate groups at positions a and c of cobyrinate, using either L-glutamine or ammonia as the nitrogen source. Involved in the biosynthesis of the unique nickel-containing tetrapyrrole coenzyme F430, the prosthetic group of methyl-coenzyme M reductase (MCR), which plays a key role in methanogenesis and anaerobic methane oxidation. Catalyzes the ATP-dependent amidation of the two carboxylate groups at positions a and c of Ni-sirohydrochlorin, using L-glutamine or ammonia as the nitrogen source.</text>
</comment>
<comment type="catalytic activity">
    <reaction evidence="1">
        <text>cob(II)yrinate + 2 L-glutamine + 2 ATP + 2 H2O = cob(II)yrinate a,c diamide + 2 L-glutamate + 2 ADP + 2 phosphate + 2 H(+)</text>
        <dbReference type="Rhea" id="RHEA:26289"/>
        <dbReference type="ChEBI" id="CHEBI:15377"/>
        <dbReference type="ChEBI" id="CHEBI:15378"/>
        <dbReference type="ChEBI" id="CHEBI:29985"/>
        <dbReference type="ChEBI" id="CHEBI:30616"/>
        <dbReference type="ChEBI" id="CHEBI:43474"/>
        <dbReference type="ChEBI" id="CHEBI:58359"/>
        <dbReference type="ChEBI" id="CHEBI:58537"/>
        <dbReference type="ChEBI" id="CHEBI:58894"/>
        <dbReference type="ChEBI" id="CHEBI:456216"/>
        <dbReference type="EC" id="6.3.5.11"/>
    </reaction>
</comment>
<comment type="catalytic activity">
    <reaction evidence="1">
        <text>Ni-sirohydrochlorin + 2 L-glutamine + 2 ATP + 2 H2O = Ni-sirohydrochlorin a,c-diamide + 2 L-glutamate + 2 ADP + 2 phosphate + 2 H(+)</text>
        <dbReference type="Rhea" id="RHEA:52896"/>
        <dbReference type="ChEBI" id="CHEBI:15377"/>
        <dbReference type="ChEBI" id="CHEBI:15378"/>
        <dbReference type="ChEBI" id="CHEBI:29985"/>
        <dbReference type="ChEBI" id="CHEBI:30616"/>
        <dbReference type="ChEBI" id="CHEBI:43474"/>
        <dbReference type="ChEBI" id="CHEBI:58359"/>
        <dbReference type="ChEBI" id="CHEBI:136841"/>
        <dbReference type="ChEBI" id="CHEBI:136887"/>
        <dbReference type="ChEBI" id="CHEBI:456216"/>
        <dbReference type="EC" id="6.3.5.12"/>
    </reaction>
</comment>
<comment type="cofactor">
    <cofactor evidence="1">
        <name>Mg(2+)</name>
        <dbReference type="ChEBI" id="CHEBI:18420"/>
    </cofactor>
</comment>
<comment type="pathway">
    <text evidence="1">Cofactor biosynthesis; adenosylcobalamin biosynthesis; cob(II)yrinate a,c-diamide from sirohydrochlorin (anaerobic route): step 10/10.</text>
</comment>
<comment type="domain">
    <text evidence="1">Comprises of two domains. The C-terminal domain contains the binding site for glutamine and catalyzes the hydrolysis of this substrate to glutamate and ammonia. The N-terminal domain is anticipated to bind ATP, and cobyrinate or Ni-sirohydrochlorin, and catalyzes the ultimate synthesis of the diamide product. The ammonia produced via the glutaminase domain is probably translocated to the adjacent domain via a molecular tunnel, where it reacts with an activated intermediate.</text>
</comment>
<comment type="miscellaneous">
    <text evidence="1">The a and c carboxylates of cobyrinate and Ni-sirohydrochlorin are activated for nucleophilic attack via formation of a phosphorylated intermediate by ATP. CbiA catalyzes first the amidation of the c-carboxylate, and then that of the a-carboxylate.</text>
</comment>
<comment type="similarity">
    <text evidence="1">Belongs to the CobB/CbiA family.</text>
</comment>
<protein>
    <recommendedName>
        <fullName evidence="1">Cobyrinate a,c-diamide synthase</fullName>
        <ecNumber evidence="1">6.3.5.11</ecNumber>
    </recommendedName>
    <alternativeName>
        <fullName evidence="1">Cobyrinic acid a,c-diamide synthetase</fullName>
    </alternativeName>
    <alternativeName>
        <fullName evidence="1">Ni-sirohydrochlorin a,c-diamide synthase</fullName>
        <ecNumber evidence="1">6.3.5.12</ecNumber>
    </alternativeName>
    <alternativeName>
        <fullName evidence="1">Ni-sirohydrochlorin a,c-diamide synthetase</fullName>
    </alternativeName>
</protein>
<organism>
    <name type="scientific">Methanothermobacter thermautotrophicus (strain ATCC 29096 / DSM 1053 / JCM 10044 / NBRC 100330 / Delta H)</name>
    <name type="common">Methanobacterium thermoautotrophicum</name>
    <dbReference type="NCBI Taxonomy" id="187420"/>
    <lineage>
        <taxon>Archaea</taxon>
        <taxon>Methanobacteriati</taxon>
        <taxon>Methanobacteriota</taxon>
        <taxon>Methanomada group</taxon>
        <taxon>Methanobacteria</taxon>
        <taxon>Methanobacteriales</taxon>
        <taxon>Methanobacteriaceae</taxon>
        <taxon>Methanothermobacter</taxon>
    </lineage>
</organism>
<name>CBIA_METTH</name>
<evidence type="ECO:0000255" key="1">
    <source>
        <dbReference type="HAMAP-Rule" id="MF_00027"/>
    </source>
</evidence>
<sequence length="447" mass="48848">MRVVLAGTGSAVGKTTIATGIMKALSGRGVQPFKVGPDYIDPSYHTMATGNTSRNIDSFFMTEAQIREAFTRAMKLSGSRMGIIEGVRGLYEGISPIGDTGSTASVAKALDAPVVLIINSRSLVKSAAAMVLGFRSLDREVKIEGVILNQVKNRRHYLKTRRAVEELTGTAVIGGIPRSSELEVEQRHLGLVPAVERDTIAAQIEKWGLAMEEYIDLEALQDIMSSAGKIRGERQPLWQRGNRKRVRIGVAIDEAFNFYYQENIEALEDNAASVVPFSPIHDEELPDVDAVYIGGGYPEIFAAELESNTSMRKSIQRFHADGRPIFGECGGLMYLMSSIDEREMCGVFPHPAEMTGRVQGLSYVIAEAVMDNLITEAGDKFRGHEFHYSRVLGASGGKFAFRVLRGRGIVDSLDGITSGSSLASYIHIHAASCPQFAANFTRNAWEF</sequence>
<dbReference type="EC" id="6.3.5.11" evidence="1"/>
<dbReference type="EC" id="6.3.5.12" evidence="1"/>
<dbReference type="EMBL" id="AE000666">
    <property type="protein sequence ID" value="AAB85935.1"/>
    <property type="molecule type" value="Genomic_DNA"/>
</dbReference>
<dbReference type="PIR" id="E69061">
    <property type="entry name" value="E69061"/>
</dbReference>
<dbReference type="RefSeq" id="WP_010877070.1">
    <property type="nucleotide sequence ID" value="NC_000916.1"/>
</dbReference>
<dbReference type="SMR" id="O27509"/>
<dbReference type="FunCoup" id="O27509">
    <property type="interactions" value="90"/>
</dbReference>
<dbReference type="STRING" id="187420.MTH_1460"/>
<dbReference type="PaxDb" id="187420-MTH_1460"/>
<dbReference type="EnsemblBacteria" id="AAB85935">
    <property type="protein sequence ID" value="AAB85935"/>
    <property type="gene ID" value="MTH_1460"/>
</dbReference>
<dbReference type="GeneID" id="1471729"/>
<dbReference type="GeneID" id="77401980"/>
<dbReference type="KEGG" id="mth:MTH_1460"/>
<dbReference type="PATRIC" id="fig|187420.15.peg.1422"/>
<dbReference type="HOGENOM" id="CLU_022752_2_1_2"/>
<dbReference type="InParanoid" id="O27509"/>
<dbReference type="UniPathway" id="UPA00148">
    <property type="reaction ID" value="UER00231"/>
</dbReference>
<dbReference type="Proteomes" id="UP000005223">
    <property type="component" value="Chromosome"/>
</dbReference>
<dbReference type="GO" id="GO:0005524">
    <property type="term" value="F:ATP binding"/>
    <property type="evidence" value="ECO:0007669"/>
    <property type="project" value="UniProtKB-UniRule"/>
</dbReference>
<dbReference type="GO" id="GO:0042242">
    <property type="term" value="F:cobyrinic acid a,c-diamide synthase activity"/>
    <property type="evidence" value="ECO:0007669"/>
    <property type="project" value="UniProtKB-UniRule"/>
</dbReference>
<dbReference type="GO" id="GO:0009236">
    <property type="term" value="P:cobalamin biosynthetic process"/>
    <property type="evidence" value="ECO:0007669"/>
    <property type="project" value="UniProtKB-UniRule"/>
</dbReference>
<dbReference type="GO" id="GO:0015948">
    <property type="term" value="P:methanogenesis"/>
    <property type="evidence" value="ECO:0007669"/>
    <property type="project" value="UniProtKB-KW"/>
</dbReference>
<dbReference type="CDD" id="cd05388">
    <property type="entry name" value="CobB_N"/>
    <property type="match status" value="1"/>
</dbReference>
<dbReference type="CDD" id="cd03130">
    <property type="entry name" value="GATase1_CobB"/>
    <property type="match status" value="1"/>
</dbReference>
<dbReference type="Gene3D" id="3.40.50.880">
    <property type="match status" value="1"/>
</dbReference>
<dbReference type="Gene3D" id="3.40.50.300">
    <property type="entry name" value="P-loop containing nucleotide triphosphate hydrolases"/>
    <property type="match status" value="1"/>
</dbReference>
<dbReference type="HAMAP" id="MF_00027">
    <property type="entry name" value="CobB_CbiA"/>
    <property type="match status" value="1"/>
</dbReference>
<dbReference type="InterPro" id="IPR004484">
    <property type="entry name" value="CbiA/CobB_synth"/>
</dbReference>
<dbReference type="InterPro" id="IPR029062">
    <property type="entry name" value="Class_I_gatase-like"/>
</dbReference>
<dbReference type="InterPro" id="IPR002586">
    <property type="entry name" value="CobQ/CobB/MinD/ParA_Nub-bd_dom"/>
</dbReference>
<dbReference type="InterPro" id="IPR011698">
    <property type="entry name" value="GATase_3"/>
</dbReference>
<dbReference type="InterPro" id="IPR027417">
    <property type="entry name" value="P-loop_NTPase"/>
</dbReference>
<dbReference type="NCBIfam" id="TIGR00379">
    <property type="entry name" value="cobB"/>
    <property type="match status" value="1"/>
</dbReference>
<dbReference type="NCBIfam" id="NF033195">
    <property type="entry name" value="F430_CfbB"/>
    <property type="match status" value="1"/>
</dbReference>
<dbReference type="NCBIfam" id="NF002204">
    <property type="entry name" value="PRK01077.1"/>
    <property type="match status" value="1"/>
</dbReference>
<dbReference type="PANTHER" id="PTHR43873">
    <property type="entry name" value="COBYRINATE A,C-DIAMIDE SYNTHASE"/>
    <property type="match status" value="1"/>
</dbReference>
<dbReference type="PANTHER" id="PTHR43873:SF1">
    <property type="entry name" value="COBYRINATE A,C-DIAMIDE SYNTHASE"/>
    <property type="match status" value="1"/>
</dbReference>
<dbReference type="Pfam" id="PF01656">
    <property type="entry name" value="CbiA"/>
    <property type="match status" value="1"/>
</dbReference>
<dbReference type="Pfam" id="PF07685">
    <property type="entry name" value="GATase_3"/>
    <property type="match status" value="1"/>
</dbReference>
<dbReference type="SUPFAM" id="SSF52317">
    <property type="entry name" value="Class I glutamine amidotransferase-like"/>
    <property type="match status" value="1"/>
</dbReference>
<dbReference type="SUPFAM" id="SSF52540">
    <property type="entry name" value="P-loop containing nucleoside triphosphate hydrolases"/>
    <property type="match status" value="1"/>
</dbReference>
<dbReference type="PROSITE" id="PS51274">
    <property type="entry name" value="GATASE_COBBQ"/>
    <property type="match status" value="1"/>
</dbReference>
<accession>O27509</accession>
<feature type="chain" id="PRO_0000141277" description="Cobyrinate a,c-diamide synthase">
    <location>
        <begin position="1"/>
        <end position="447"/>
    </location>
</feature>
<feature type="domain" description="GATase cobBQ-type" evidence="1">
    <location>
        <begin position="247"/>
        <end position="435"/>
    </location>
</feature>
<feature type="active site" description="Nucleophile" evidence="1">
    <location>
        <position position="329"/>
    </location>
</feature>
<feature type="site" description="Increases nucleophilicity of active site Cys" evidence="1">
    <location>
        <position position="427"/>
    </location>
</feature>
<gene>
    <name evidence="1" type="primary">cbiA</name>
    <name evidence="1" type="synonym">cfbB</name>
    <name type="ordered locus">MTH_1460</name>
</gene>